<comment type="function">
    <text evidence="1">Could be a nuclease involved in processing of the 5'-end of pre-16S rRNA.</text>
</comment>
<comment type="subcellular location">
    <subcellularLocation>
        <location evidence="1">Cytoplasm</location>
    </subcellularLocation>
</comment>
<comment type="similarity">
    <text evidence="1">Belongs to the YqgF nuclease family.</text>
</comment>
<organism>
    <name type="scientific">Mycobacteroides abscessus (strain ATCC 19977 / DSM 44196 / CCUG 20993 / CIP 104536 / JCM 13569 / NCTC 13031 / TMC 1543 / L948)</name>
    <name type="common">Mycobacterium abscessus</name>
    <dbReference type="NCBI Taxonomy" id="561007"/>
    <lineage>
        <taxon>Bacteria</taxon>
        <taxon>Bacillati</taxon>
        <taxon>Actinomycetota</taxon>
        <taxon>Actinomycetes</taxon>
        <taxon>Mycobacteriales</taxon>
        <taxon>Mycobacteriaceae</taxon>
        <taxon>Mycobacteroides</taxon>
        <taxon>Mycobacteroides abscessus</taxon>
    </lineage>
</organism>
<gene>
    <name type="ordered locus">MAB_2850c</name>
</gene>
<evidence type="ECO:0000255" key="1">
    <source>
        <dbReference type="HAMAP-Rule" id="MF_00651"/>
    </source>
</evidence>
<evidence type="ECO:0000256" key="2">
    <source>
        <dbReference type="SAM" id="MobiDB-lite"/>
    </source>
</evidence>
<sequence length="166" mass="17928">MPDTAAPTPDRPGPDDPGRGRRLGVDVGTVRIGISSSDPDGILATPVETVSRDAKEDSDFRRIAELVEEMSVVEVVVGLPRNLREGTGSSARDAAGFARELGERIAPVPVRLVDERFTTTTAQRSLREAGVRSRQQRGIIDQAAAVAILQDWLEQRRRCGSEGDTP</sequence>
<accession>B1MCF8</accession>
<protein>
    <recommendedName>
        <fullName evidence="1">Putative pre-16S rRNA nuclease</fullName>
        <ecNumber evidence="1">3.1.-.-</ecNumber>
    </recommendedName>
</protein>
<keyword id="KW-0963">Cytoplasm</keyword>
<keyword id="KW-0378">Hydrolase</keyword>
<keyword id="KW-0540">Nuclease</keyword>
<keyword id="KW-1185">Reference proteome</keyword>
<keyword id="KW-0690">Ribosome biogenesis</keyword>
<reference key="1">
    <citation type="journal article" date="2009" name="PLoS ONE">
        <title>Non mycobacterial virulence genes in the genome of the emerging pathogen Mycobacterium abscessus.</title>
        <authorList>
            <person name="Ripoll F."/>
            <person name="Pasek S."/>
            <person name="Schenowitz C."/>
            <person name="Dossat C."/>
            <person name="Barbe V."/>
            <person name="Rottman M."/>
            <person name="Macheras E."/>
            <person name="Heym B."/>
            <person name="Herrmann J.L."/>
            <person name="Daffe M."/>
            <person name="Brosch R."/>
            <person name="Risler J.L."/>
            <person name="Gaillard J.L."/>
        </authorList>
    </citation>
    <scope>NUCLEOTIDE SEQUENCE [LARGE SCALE GENOMIC DNA]</scope>
    <source>
        <strain>ATCC 19977 / DSM 44196 / CCUG 20993 / CIP 104536 / JCM 13569 / NCTC 13031 / TMC 1543 / L948</strain>
    </source>
</reference>
<proteinExistence type="inferred from homology"/>
<name>YQGF_MYCA9</name>
<feature type="chain" id="PRO_1000131048" description="Putative pre-16S rRNA nuclease">
    <location>
        <begin position="1"/>
        <end position="166"/>
    </location>
</feature>
<feature type="region of interest" description="Disordered" evidence="2">
    <location>
        <begin position="1"/>
        <end position="24"/>
    </location>
</feature>
<dbReference type="EC" id="3.1.-.-" evidence="1"/>
<dbReference type="EMBL" id="CU458896">
    <property type="protein sequence ID" value="CAM62929.1"/>
    <property type="molecule type" value="Genomic_DNA"/>
</dbReference>
<dbReference type="SMR" id="B1MCF8"/>
<dbReference type="GeneID" id="93379781"/>
<dbReference type="KEGG" id="mab:MAB_2850c"/>
<dbReference type="Proteomes" id="UP000007137">
    <property type="component" value="Chromosome"/>
</dbReference>
<dbReference type="GO" id="GO:0005829">
    <property type="term" value="C:cytosol"/>
    <property type="evidence" value="ECO:0007669"/>
    <property type="project" value="TreeGrafter"/>
</dbReference>
<dbReference type="GO" id="GO:0004518">
    <property type="term" value="F:nuclease activity"/>
    <property type="evidence" value="ECO:0007669"/>
    <property type="project" value="UniProtKB-KW"/>
</dbReference>
<dbReference type="GO" id="GO:0000967">
    <property type="term" value="P:rRNA 5'-end processing"/>
    <property type="evidence" value="ECO:0007669"/>
    <property type="project" value="UniProtKB-UniRule"/>
</dbReference>
<dbReference type="CDD" id="cd16964">
    <property type="entry name" value="YqgF"/>
    <property type="match status" value="1"/>
</dbReference>
<dbReference type="FunFam" id="3.30.420.140:FF:000005">
    <property type="entry name" value="Putative pre-16S rRNA nuclease"/>
    <property type="match status" value="1"/>
</dbReference>
<dbReference type="Gene3D" id="3.30.420.140">
    <property type="entry name" value="YqgF/RNase H-like domain"/>
    <property type="match status" value="1"/>
</dbReference>
<dbReference type="HAMAP" id="MF_00651">
    <property type="entry name" value="Nuclease_YqgF"/>
    <property type="match status" value="1"/>
</dbReference>
<dbReference type="InterPro" id="IPR012337">
    <property type="entry name" value="RNaseH-like_sf"/>
</dbReference>
<dbReference type="InterPro" id="IPR005227">
    <property type="entry name" value="YqgF"/>
</dbReference>
<dbReference type="InterPro" id="IPR006641">
    <property type="entry name" value="YqgF/RNaseH-like_dom"/>
</dbReference>
<dbReference type="InterPro" id="IPR037027">
    <property type="entry name" value="YqgF/RNaseH-like_dom_sf"/>
</dbReference>
<dbReference type="NCBIfam" id="TIGR00250">
    <property type="entry name" value="RNAse_H_YqgF"/>
    <property type="match status" value="1"/>
</dbReference>
<dbReference type="PANTHER" id="PTHR33317">
    <property type="entry name" value="POLYNUCLEOTIDYL TRANSFERASE, RIBONUCLEASE H-LIKE SUPERFAMILY PROTEIN"/>
    <property type="match status" value="1"/>
</dbReference>
<dbReference type="PANTHER" id="PTHR33317:SF4">
    <property type="entry name" value="POLYNUCLEOTIDYL TRANSFERASE, RIBONUCLEASE H-LIKE SUPERFAMILY PROTEIN"/>
    <property type="match status" value="1"/>
</dbReference>
<dbReference type="Pfam" id="PF03652">
    <property type="entry name" value="RuvX"/>
    <property type="match status" value="1"/>
</dbReference>
<dbReference type="SMART" id="SM00732">
    <property type="entry name" value="YqgFc"/>
    <property type="match status" value="1"/>
</dbReference>
<dbReference type="SUPFAM" id="SSF53098">
    <property type="entry name" value="Ribonuclease H-like"/>
    <property type="match status" value="1"/>
</dbReference>